<proteinExistence type="evidence at transcript level"/>
<keyword id="KW-0963">Cytoplasm</keyword>
<keyword id="KW-0968">Cytoplasmic vesicle</keyword>
<keyword id="KW-0931">ER-Golgi transport</keyword>
<keyword id="KW-0333">Golgi apparatus</keyword>
<keyword id="KW-0472">Membrane</keyword>
<keyword id="KW-0653">Protein transport</keyword>
<keyword id="KW-1185">Reference proteome</keyword>
<keyword id="KW-0813">Transport</keyword>
<protein>
    <recommendedName>
        <fullName>Coatomer subunit delta-2</fullName>
    </recommendedName>
    <alternativeName>
        <fullName>Delta-coat protein 2</fullName>
        <shortName>Delta-COP 2</shortName>
    </alternativeName>
</protein>
<dbReference type="EMBL" id="AP008211">
    <property type="protein sequence ID" value="BAF17074.1"/>
    <property type="molecule type" value="Genomic_DNA"/>
</dbReference>
<dbReference type="EMBL" id="AP014961">
    <property type="protein sequence ID" value="BAS93286.1"/>
    <property type="molecule type" value="Genomic_DNA"/>
</dbReference>
<dbReference type="EMBL" id="AK100520">
    <property type="status" value="NOT_ANNOTATED_CDS"/>
    <property type="molecule type" value="mRNA"/>
</dbReference>
<dbReference type="RefSeq" id="XP_015639678.1">
    <property type="nucleotide sequence ID" value="XM_015784192.1"/>
</dbReference>
<dbReference type="SMR" id="Q0DJ99"/>
<dbReference type="FunCoup" id="Q0DJ99">
    <property type="interactions" value="4040"/>
</dbReference>
<dbReference type="STRING" id="39947.Q0DJ99"/>
<dbReference type="PaxDb" id="39947-Q0DJ99"/>
<dbReference type="EnsemblPlants" id="Os05t0311000-01">
    <property type="protein sequence ID" value="Os05t0311000-01"/>
    <property type="gene ID" value="Os05g0311000"/>
</dbReference>
<dbReference type="Gramene" id="Os05t0311000-01">
    <property type="protein sequence ID" value="Os05t0311000-01"/>
    <property type="gene ID" value="Os05g0311000"/>
</dbReference>
<dbReference type="KEGG" id="dosa:Os05g0311000"/>
<dbReference type="KEGG" id="osa:4338376"/>
<dbReference type="eggNOG" id="KOG2635">
    <property type="taxonomic scope" value="Eukaryota"/>
</dbReference>
<dbReference type="HOGENOM" id="CLU_019988_3_0_1"/>
<dbReference type="InParanoid" id="Q0DJ99"/>
<dbReference type="OMA" id="CEDNETT"/>
<dbReference type="OrthoDB" id="10266042at2759"/>
<dbReference type="Proteomes" id="UP000000763">
    <property type="component" value="Chromosome 5"/>
</dbReference>
<dbReference type="Proteomes" id="UP000059680">
    <property type="component" value="Chromosome 5"/>
</dbReference>
<dbReference type="ExpressionAtlas" id="Q0DJ99">
    <property type="expression patterns" value="baseline and differential"/>
</dbReference>
<dbReference type="GO" id="GO:0030126">
    <property type="term" value="C:COPI vesicle coat"/>
    <property type="evidence" value="ECO:0000318"/>
    <property type="project" value="GO_Central"/>
</dbReference>
<dbReference type="GO" id="GO:0000139">
    <property type="term" value="C:Golgi membrane"/>
    <property type="evidence" value="ECO:0007669"/>
    <property type="project" value="UniProtKB-SubCell"/>
</dbReference>
<dbReference type="GO" id="GO:0006888">
    <property type="term" value="P:endoplasmic reticulum to Golgi vesicle-mediated transport"/>
    <property type="evidence" value="ECO:0000318"/>
    <property type="project" value="GO_Central"/>
</dbReference>
<dbReference type="GO" id="GO:0051645">
    <property type="term" value="P:Golgi localization"/>
    <property type="evidence" value="ECO:0000318"/>
    <property type="project" value="GO_Central"/>
</dbReference>
<dbReference type="GO" id="GO:0015031">
    <property type="term" value="P:protein transport"/>
    <property type="evidence" value="ECO:0007669"/>
    <property type="project" value="UniProtKB-KW"/>
</dbReference>
<dbReference type="GO" id="GO:0006890">
    <property type="term" value="P:retrograde vesicle-mediated transport, Golgi to endoplasmic reticulum"/>
    <property type="evidence" value="ECO:0000318"/>
    <property type="project" value="GO_Central"/>
</dbReference>
<dbReference type="CDD" id="cd09254">
    <property type="entry name" value="AP_delta-COPI_MHD"/>
    <property type="match status" value="1"/>
</dbReference>
<dbReference type="CDD" id="cd14830">
    <property type="entry name" value="Delta_COP_N"/>
    <property type="match status" value="1"/>
</dbReference>
<dbReference type="FunFam" id="2.60.40.1170:FF:000015">
    <property type="entry name" value="Coatomer subunit delta"/>
    <property type="match status" value="1"/>
</dbReference>
<dbReference type="FunFam" id="3.30.450.60:FF:000003">
    <property type="entry name" value="Coatomer subunit delta"/>
    <property type="match status" value="1"/>
</dbReference>
<dbReference type="Gene3D" id="3.30.450.60">
    <property type="match status" value="1"/>
</dbReference>
<dbReference type="Gene3D" id="2.60.40.1170">
    <property type="entry name" value="Mu homology domain, subdomain B"/>
    <property type="match status" value="2"/>
</dbReference>
<dbReference type="InterPro" id="IPR036168">
    <property type="entry name" value="AP2_Mu_C_sf"/>
</dbReference>
<dbReference type="InterPro" id="IPR027059">
    <property type="entry name" value="Coatomer_dsu"/>
</dbReference>
<dbReference type="InterPro" id="IPR011012">
    <property type="entry name" value="Longin-like_dom_sf"/>
</dbReference>
<dbReference type="InterPro" id="IPR028565">
    <property type="entry name" value="MHD"/>
</dbReference>
<dbReference type="PANTHER" id="PTHR10121">
    <property type="entry name" value="COATOMER SUBUNIT DELTA"/>
    <property type="match status" value="1"/>
</dbReference>
<dbReference type="PANTHER" id="PTHR10121:SF0">
    <property type="entry name" value="COATOMER SUBUNIT DELTA"/>
    <property type="match status" value="1"/>
</dbReference>
<dbReference type="Pfam" id="PF00928">
    <property type="entry name" value="Adap_comp_sub"/>
    <property type="match status" value="1"/>
</dbReference>
<dbReference type="SUPFAM" id="SSF49447">
    <property type="entry name" value="Second domain of Mu2 adaptin subunit (ap50) of ap2 adaptor"/>
    <property type="match status" value="1"/>
</dbReference>
<dbReference type="SUPFAM" id="SSF64356">
    <property type="entry name" value="SNARE-like"/>
    <property type="match status" value="1"/>
</dbReference>
<dbReference type="PROSITE" id="PS51072">
    <property type="entry name" value="MHD"/>
    <property type="match status" value="1"/>
</dbReference>
<comment type="function">
    <text evidence="1">The coatomer is a cytosolic protein complex that binds to dilysine motifs and reversibly associates with Golgi non-clathrin-coated vesicles, which further mediate biosynthetic protein transport from the ER, via the Golgi up to the trans Golgi network. Coatomer complex is required for budding from Golgi membranes, and is essential for the retrograde Golgi-to-ER transport of dilysine-tagged proteins (By similarity).</text>
</comment>
<comment type="subunit">
    <text evidence="1">Oligomeric complex that consists of at least the alpha, beta, beta', gamma, delta, epsilon and zeta subunits.</text>
</comment>
<comment type="subcellular location">
    <subcellularLocation>
        <location evidence="1">Cytoplasm</location>
    </subcellularLocation>
    <subcellularLocation>
        <location evidence="1">Golgi apparatus membrane</location>
        <topology evidence="1">Peripheral membrane protein</topology>
        <orientation evidence="1">Cytoplasmic side</orientation>
    </subcellularLocation>
    <subcellularLocation>
        <location evidence="1">Cytoplasmic vesicle</location>
        <location evidence="1">COPI-coated vesicle membrane</location>
        <topology evidence="1">Peripheral membrane protein</topology>
        <orientation evidence="1">Cytoplasmic side</orientation>
    </subcellularLocation>
    <text evidence="1">The coatomer is cytoplasmic or polymerized on the cytoplasmic side of the Golgi, as well as on the vesicles/buds originating from it.</text>
</comment>
<comment type="similarity">
    <text evidence="4">Belongs to the adaptor complexes medium subunit family. Delta-COP subfamily.</text>
</comment>
<evidence type="ECO:0000250" key="1"/>
<evidence type="ECO:0000255" key="2">
    <source>
        <dbReference type="PROSITE-ProRule" id="PRU00404"/>
    </source>
</evidence>
<evidence type="ECO:0000256" key="3">
    <source>
        <dbReference type="SAM" id="MobiDB-lite"/>
    </source>
</evidence>
<evidence type="ECO:0000305" key="4"/>
<organism>
    <name type="scientific">Oryza sativa subsp. japonica</name>
    <name type="common">Rice</name>
    <dbReference type="NCBI Taxonomy" id="39947"/>
    <lineage>
        <taxon>Eukaryota</taxon>
        <taxon>Viridiplantae</taxon>
        <taxon>Streptophyta</taxon>
        <taxon>Embryophyta</taxon>
        <taxon>Tracheophyta</taxon>
        <taxon>Spermatophyta</taxon>
        <taxon>Magnoliopsida</taxon>
        <taxon>Liliopsida</taxon>
        <taxon>Poales</taxon>
        <taxon>Poaceae</taxon>
        <taxon>BOP clade</taxon>
        <taxon>Oryzoideae</taxon>
        <taxon>Oryzeae</taxon>
        <taxon>Oryzinae</taxon>
        <taxon>Oryza</taxon>
        <taxon>Oryza sativa</taxon>
    </lineage>
</organism>
<reference key="1">
    <citation type="journal article" date="2005" name="Nature">
        <title>The map-based sequence of the rice genome.</title>
        <authorList>
            <consortium name="International rice genome sequencing project (IRGSP)"/>
        </authorList>
    </citation>
    <scope>NUCLEOTIDE SEQUENCE [LARGE SCALE GENOMIC DNA]</scope>
    <source>
        <strain>cv. Nipponbare</strain>
    </source>
</reference>
<reference key="2">
    <citation type="journal article" date="2008" name="Nucleic Acids Res.">
        <title>The rice annotation project database (RAP-DB): 2008 update.</title>
        <authorList>
            <consortium name="The rice annotation project (RAP)"/>
        </authorList>
    </citation>
    <scope>GENOME REANNOTATION</scope>
    <source>
        <strain>cv. Nipponbare</strain>
    </source>
</reference>
<reference key="3">
    <citation type="journal article" date="2013" name="Rice">
        <title>Improvement of the Oryza sativa Nipponbare reference genome using next generation sequence and optical map data.</title>
        <authorList>
            <person name="Kawahara Y."/>
            <person name="de la Bastide M."/>
            <person name="Hamilton J.P."/>
            <person name="Kanamori H."/>
            <person name="McCombie W.R."/>
            <person name="Ouyang S."/>
            <person name="Schwartz D.C."/>
            <person name="Tanaka T."/>
            <person name="Wu J."/>
            <person name="Zhou S."/>
            <person name="Childs K.L."/>
            <person name="Davidson R.M."/>
            <person name="Lin H."/>
            <person name="Quesada-Ocampo L."/>
            <person name="Vaillancourt B."/>
            <person name="Sakai H."/>
            <person name="Lee S.S."/>
            <person name="Kim J."/>
            <person name="Numa H."/>
            <person name="Itoh T."/>
            <person name="Buell C.R."/>
            <person name="Matsumoto T."/>
        </authorList>
    </citation>
    <scope>GENOME REANNOTATION</scope>
    <source>
        <strain>cv. Nipponbare</strain>
    </source>
</reference>
<reference key="4">
    <citation type="journal article" date="2003" name="Science">
        <title>Collection, mapping, and annotation of over 28,000 cDNA clones from japonica rice.</title>
        <authorList>
            <consortium name="The rice full-length cDNA consortium"/>
        </authorList>
    </citation>
    <scope>NUCLEOTIDE SEQUENCE [LARGE SCALE MRNA]</scope>
    <source>
        <strain>cv. Nipponbare</strain>
    </source>
</reference>
<accession>Q0DJ99</accession>
<accession>A0A0P0WKJ9</accession>
<gene>
    <name type="ordered locus">Os05g0311000</name>
    <name type="ordered locus">LOC_Os05g24594</name>
</gene>
<sequence length="523" mass="57503">MVVLAASIISKSGKALVSRQFVDMSRIRIEGLLAAFPKLVGTGKQHTYVETENVRYVYQPIEGLYLLLITNKQSNILEDLDTLRLLSKLVPEYSPSLDEEGVCKTAFELIFAFDEAICLGNKENVTVQQVKQYCEMESHEEKAHKLMMQSKINETRDVMKKKASELDKMKMERGKLDKGGYSAISGPRVVEKAFGDMSITGSGFGSGSGLGGLSMDMDSFASKPKGRPSAAATAPGKGLGMKLGKTQKTNQFLESLKAEGEVILEDVQPSSVQSRVSPLPPSDPVTVTIEEKLNVTVKRDGGVNNFDVQGTLALQVLNDTDGFIQLQIENQDVPGLSFKTHPNINKDLFNSQQVVGAKDPNRPFPSGQNETPLVKWRIHGMDESSLPLSVNCWPSVSGNETYVNIEYEAAEMFDLHNVVISIPLPALREAPSVRQIDGEWRYDSRNSVLEWSILLIDQSNRSGSMEFVVPPADPSTFFPISIGFSASSTFSDLKVTGIRPLKDGNPPKYSQRARLVTANYQVV</sequence>
<feature type="chain" id="PRO_0000285622" description="Coatomer subunit delta-2">
    <location>
        <begin position="1"/>
        <end position="523"/>
    </location>
</feature>
<feature type="domain" description="MHD" evidence="2">
    <location>
        <begin position="282"/>
        <end position="523"/>
    </location>
</feature>
<feature type="region of interest" description="Disordered" evidence="3">
    <location>
        <begin position="218"/>
        <end position="243"/>
    </location>
</feature>
<name>COPD2_ORYSJ</name>